<accession>P9WGZ0</accession>
<accession>L0TCT4</accession>
<accession>O06324</accession>
<accession>P66701</accession>
<dbReference type="EC" id="2.7.7.6" evidence="1"/>
<dbReference type="EMBL" id="AE000516">
    <property type="protein sequence ID" value="AAK47903.1"/>
    <property type="molecule type" value="Genomic_DNA"/>
</dbReference>
<dbReference type="PIR" id="F70565">
    <property type="entry name" value="F70565"/>
</dbReference>
<dbReference type="RefSeq" id="WP_003418351.1">
    <property type="nucleotide sequence ID" value="NZ_KK341227.1"/>
</dbReference>
<dbReference type="EMDB" id="EMD-14696"/>
<dbReference type="EMDB" id="EMD-14697"/>
<dbReference type="SMR" id="P9WGZ0"/>
<dbReference type="KEGG" id="mtc:MT3564"/>
<dbReference type="PATRIC" id="fig|83331.31.peg.3821"/>
<dbReference type="HOGENOM" id="CLU_053084_0_1_11"/>
<dbReference type="Proteomes" id="UP000001020">
    <property type="component" value="Chromosome"/>
</dbReference>
<dbReference type="GO" id="GO:0005737">
    <property type="term" value="C:cytoplasm"/>
    <property type="evidence" value="ECO:0007669"/>
    <property type="project" value="UniProtKB-ARBA"/>
</dbReference>
<dbReference type="GO" id="GO:0000428">
    <property type="term" value="C:DNA-directed RNA polymerase complex"/>
    <property type="evidence" value="ECO:0007669"/>
    <property type="project" value="UniProtKB-KW"/>
</dbReference>
<dbReference type="GO" id="GO:0003677">
    <property type="term" value="F:DNA binding"/>
    <property type="evidence" value="ECO:0007669"/>
    <property type="project" value="UniProtKB-UniRule"/>
</dbReference>
<dbReference type="GO" id="GO:0003899">
    <property type="term" value="F:DNA-directed RNA polymerase activity"/>
    <property type="evidence" value="ECO:0007669"/>
    <property type="project" value="UniProtKB-UniRule"/>
</dbReference>
<dbReference type="GO" id="GO:0046983">
    <property type="term" value="F:protein dimerization activity"/>
    <property type="evidence" value="ECO:0007669"/>
    <property type="project" value="InterPro"/>
</dbReference>
<dbReference type="GO" id="GO:0006351">
    <property type="term" value="P:DNA-templated transcription"/>
    <property type="evidence" value="ECO:0007669"/>
    <property type="project" value="UniProtKB-UniRule"/>
</dbReference>
<dbReference type="CDD" id="cd06928">
    <property type="entry name" value="RNAP_alpha_NTD"/>
    <property type="match status" value="1"/>
</dbReference>
<dbReference type="FunFam" id="1.10.150.20:FF:000001">
    <property type="entry name" value="DNA-directed RNA polymerase subunit alpha"/>
    <property type="match status" value="1"/>
</dbReference>
<dbReference type="FunFam" id="2.170.120.12:FF:000001">
    <property type="entry name" value="DNA-directed RNA polymerase subunit alpha"/>
    <property type="match status" value="1"/>
</dbReference>
<dbReference type="Gene3D" id="1.10.150.20">
    <property type="entry name" value="5' to 3' exonuclease, C-terminal subdomain"/>
    <property type="match status" value="1"/>
</dbReference>
<dbReference type="Gene3D" id="2.170.120.12">
    <property type="entry name" value="DNA-directed RNA polymerase, insert domain"/>
    <property type="match status" value="1"/>
</dbReference>
<dbReference type="Gene3D" id="3.30.1360.10">
    <property type="entry name" value="RNA polymerase, RBP11-like subunit"/>
    <property type="match status" value="1"/>
</dbReference>
<dbReference type="HAMAP" id="MF_00059">
    <property type="entry name" value="RNApol_bact_RpoA"/>
    <property type="match status" value="1"/>
</dbReference>
<dbReference type="InterPro" id="IPR011262">
    <property type="entry name" value="DNA-dir_RNA_pol_insert"/>
</dbReference>
<dbReference type="InterPro" id="IPR011263">
    <property type="entry name" value="DNA-dir_RNA_pol_RpoA/D/Rpb3"/>
</dbReference>
<dbReference type="InterPro" id="IPR011773">
    <property type="entry name" value="DNA-dir_RpoA"/>
</dbReference>
<dbReference type="InterPro" id="IPR036603">
    <property type="entry name" value="RBP11-like"/>
</dbReference>
<dbReference type="InterPro" id="IPR011260">
    <property type="entry name" value="RNAP_asu_C"/>
</dbReference>
<dbReference type="InterPro" id="IPR036643">
    <property type="entry name" value="RNApol_insert_sf"/>
</dbReference>
<dbReference type="NCBIfam" id="NF003513">
    <property type="entry name" value="PRK05182.1-2"/>
    <property type="match status" value="1"/>
</dbReference>
<dbReference type="NCBIfam" id="NF003514">
    <property type="entry name" value="PRK05182.1-4"/>
    <property type="match status" value="1"/>
</dbReference>
<dbReference type="NCBIfam" id="NF003519">
    <property type="entry name" value="PRK05182.2-5"/>
    <property type="match status" value="1"/>
</dbReference>
<dbReference type="NCBIfam" id="TIGR02027">
    <property type="entry name" value="rpoA"/>
    <property type="match status" value="1"/>
</dbReference>
<dbReference type="Pfam" id="PF01000">
    <property type="entry name" value="RNA_pol_A_bac"/>
    <property type="match status" value="1"/>
</dbReference>
<dbReference type="Pfam" id="PF03118">
    <property type="entry name" value="RNA_pol_A_CTD"/>
    <property type="match status" value="1"/>
</dbReference>
<dbReference type="Pfam" id="PF01193">
    <property type="entry name" value="RNA_pol_L"/>
    <property type="match status" value="1"/>
</dbReference>
<dbReference type="SMART" id="SM00662">
    <property type="entry name" value="RPOLD"/>
    <property type="match status" value="1"/>
</dbReference>
<dbReference type="SUPFAM" id="SSF47789">
    <property type="entry name" value="C-terminal domain of RNA polymerase alpha subunit"/>
    <property type="match status" value="1"/>
</dbReference>
<dbReference type="SUPFAM" id="SSF56553">
    <property type="entry name" value="Insert subdomain of RNA polymerase alpha subunit"/>
    <property type="match status" value="1"/>
</dbReference>
<dbReference type="SUPFAM" id="SSF55257">
    <property type="entry name" value="RBP11-like subunits of RNA polymerase"/>
    <property type="match status" value="1"/>
</dbReference>
<feature type="chain" id="PRO_0000428278" description="DNA-directed RNA polymerase subunit alpha">
    <location>
        <begin position="1"/>
        <end position="347"/>
    </location>
</feature>
<feature type="region of interest" description="Alpha N-terminal domain (alpha-NTD)" evidence="1">
    <location>
        <begin position="1"/>
        <end position="226"/>
    </location>
</feature>
<feature type="region of interest" description="Alpha C-terminal domain (alpha-CTD)" evidence="1">
    <location>
        <begin position="243"/>
        <end position="347"/>
    </location>
</feature>
<organism>
    <name type="scientific">Mycobacterium tuberculosis (strain CDC 1551 / Oshkosh)</name>
    <dbReference type="NCBI Taxonomy" id="83331"/>
    <lineage>
        <taxon>Bacteria</taxon>
        <taxon>Bacillati</taxon>
        <taxon>Actinomycetota</taxon>
        <taxon>Actinomycetes</taxon>
        <taxon>Mycobacteriales</taxon>
        <taxon>Mycobacteriaceae</taxon>
        <taxon>Mycobacterium</taxon>
        <taxon>Mycobacterium tuberculosis complex</taxon>
    </lineage>
</organism>
<gene>
    <name evidence="1" type="primary">rpoA</name>
    <name type="ordered locus">MT3564</name>
</gene>
<protein>
    <recommendedName>
        <fullName evidence="1">DNA-directed RNA polymerase subunit alpha</fullName>
        <shortName evidence="1">RNAP subunit alpha</shortName>
        <ecNumber evidence="1">2.7.7.6</ecNumber>
    </recommendedName>
    <alternativeName>
        <fullName evidence="1">RNA polymerase subunit alpha</fullName>
    </alternativeName>
    <alternativeName>
        <fullName evidence="1">Transcriptase subunit alpha</fullName>
    </alternativeName>
</protein>
<reference key="1">
    <citation type="journal article" date="2002" name="J. Bacteriol.">
        <title>Whole-genome comparison of Mycobacterium tuberculosis clinical and laboratory strains.</title>
        <authorList>
            <person name="Fleischmann R.D."/>
            <person name="Alland D."/>
            <person name="Eisen J.A."/>
            <person name="Carpenter L."/>
            <person name="White O."/>
            <person name="Peterson J.D."/>
            <person name="DeBoy R.T."/>
            <person name="Dodson R.J."/>
            <person name="Gwinn M.L."/>
            <person name="Haft D.H."/>
            <person name="Hickey E.K."/>
            <person name="Kolonay J.F."/>
            <person name="Nelson W.C."/>
            <person name="Umayam L.A."/>
            <person name="Ermolaeva M.D."/>
            <person name="Salzberg S.L."/>
            <person name="Delcher A."/>
            <person name="Utterback T.R."/>
            <person name="Weidman J.F."/>
            <person name="Khouri H.M."/>
            <person name="Gill J."/>
            <person name="Mikula A."/>
            <person name="Bishai W."/>
            <person name="Jacobs W.R. Jr."/>
            <person name="Venter J.C."/>
            <person name="Fraser C.M."/>
        </authorList>
    </citation>
    <scope>NUCLEOTIDE SEQUENCE [LARGE SCALE GENOMIC DNA]</scope>
    <source>
        <strain>CDC 1551 / Oshkosh</strain>
    </source>
</reference>
<sequence>MLISQRPTLSEDVLTDNRSQFVIEPLEPGFGYTLGNSLRRTLLSSIPGAAVTSIRIDGVLHEFTTVPGVKEDVTEIILNLKSLVVSSEEDEPVTMYLRKQGPGEVTAGDIVPPAGVTVHNPGMHIATLNDKGKLEVELVVERGRGYVPAVQNRASGAEIGRIPVDSIYSPVLKVTYKVDATRVEQRTDFDKLILDVETKNSISPRDALASAGKTLVELFGLARELNVEAEGIEIGPSPAEADHIASFALPIDDLDLTVRSYNCLKREGVHTVGELVARTESDLLDIRNFGQKSIDEVKIKLHQLGLSLKDSPPSFDPSEVAGYDVATGTWSTEGAYDEQDYAETEQL</sequence>
<comment type="function">
    <text evidence="1">DNA-dependent RNA polymerase catalyzes the transcription of DNA into RNA using the four ribonucleoside triphosphates as substrates.</text>
</comment>
<comment type="catalytic activity">
    <reaction evidence="1">
        <text>RNA(n) + a ribonucleoside 5'-triphosphate = RNA(n+1) + diphosphate</text>
        <dbReference type="Rhea" id="RHEA:21248"/>
        <dbReference type="Rhea" id="RHEA-COMP:14527"/>
        <dbReference type="Rhea" id="RHEA-COMP:17342"/>
        <dbReference type="ChEBI" id="CHEBI:33019"/>
        <dbReference type="ChEBI" id="CHEBI:61557"/>
        <dbReference type="ChEBI" id="CHEBI:140395"/>
        <dbReference type="EC" id="2.7.7.6"/>
    </reaction>
</comment>
<comment type="subunit">
    <text evidence="1">Homodimer. The RNAP catalytic core consists of 2 alpha, 1 beta, 1 beta' and 1 omega subunit. When a sigma factor is associated with the core the holoenzyme is formed, which can initiate transcription.</text>
</comment>
<comment type="domain">
    <text evidence="1">The N-terminal domain is essential for RNAP assembly and basal transcription, whereas the C-terminal domain is involved in interaction with transcriptional regulators and with upstream promoter elements.</text>
</comment>
<comment type="similarity">
    <text evidence="1">Belongs to the RNA polymerase alpha chain family.</text>
</comment>
<name>RPOA_MYCTO</name>
<keyword id="KW-0240">DNA-directed RNA polymerase</keyword>
<keyword id="KW-0548">Nucleotidyltransferase</keyword>
<keyword id="KW-1185">Reference proteome</keyword>
<keyword id="KW-0804">Transcription</keyword>
<keyword id="KW-0808">Transferase</keyword>
<proteinExistence type="inferred from homology"/>
<evidence type="ECO:0000255" key="1">
    <source>
        <dbReference type="HAMAP-Rule" id="MF_00059"/>
    </source>
</evidence>